<protein>
    <recommendedName>
        <fullName>Zinc finger and BTB domain-containing protein 8A</fullName>
    </recommendedName>
</protein>
<reference key="1">
    <citation type="journal article" date="2005" name="Science">
        <title>The transcriptional landscape of the mammalian genome.</title>
        <authorList>
            <person name="Carninci P."/>
            <person name="Kasukawa T."/>
            <person name="Katayama S."/>
            <person name="Gough J."/>
            <person name="Frith M.C."/>
            <person name="Maeda N."/>
            <person name="Oyama R."/>
            <person name="Ravasi T."/>
            <person name="Lenhard B."/>
            <person name="Wells C."/>
            <person name="Kodzius R."/>
            <person name="Shimokawa K."/>
            <person name="Bajic V.B."/>
            <person name="Brenner S.E."/>
            <person name="Batalov S."/>
            <person name="Forrest A.R."/>
            <person name="Zavolan M."/>
            <person name="Davis M.J."/>
            <person name="Wilming L.G."/>
            <person name="Aidinis V."/>
            <person name="Allen J.E."/>
            <person name="Ambesi-Impiombato A."/>
            <person name="Apweiler R."/>
            <person name="Aturaliya R.N."/>
            <person name="Bailey T.L."/>
            <person name="Bansal M."/>
            <person name="Baxter L."/>
            <person name="Beisel K.W."/>
            <person name="Bersano T."/>
            <person name="Bono H."/>
            <person name="Chalk A.M."/>
            <person name="Chiu K.P."/>
            <person name="Choudhary V."/>
            <person name="Christoffels A."/>
            <person name="Clutterbuck D.R."/>
            <person name="Crowe M.L."/>
            <person name="Dalla E."/>
            <person name="Dalrymple B.P."/>
            <person name="de Bono B."/>
            <person name="Della Gatta G."/>
            <person name="di Bernardo D."/>
            <person name="Down T."/>
            <person name="Engstrom P."/>
            <person name="Fagiolini M."/>
            <person name="Faulkner G."/>
            <person name="Fletcher C.F."/>
            <person name="Fukushima T."/>
            <person name="Furuno M."/>
            <person name="Futaki S."/>
            <person name="Gariboldi M."/>
            <person name="Georgii-Hemming P."/>
            <person name="Gingeras T.R."/>
            <person name="Gojobori T."/>
            <person name="Green R.E."/>
            <person name="Gustincich S."/>
            <person name="Harbers M."/>
            <person name="Hayashi Y."/>
            <person name="Hensch T.K."/>
            <person name="Hirokawa N."/>
            <person name="Hill D."/>
            <person name="Huminiecki L."/>
            <person name="Iacono M."/>
            <person name="Ikeo K."/>
            <person name="Iwama A."/>
            <person name="Ishikawa T."/>
            <person name="Jakt M."/>
            <person name="Kanapin A."/>
            <person name="Katoh M."/>
            <person name="Kawasawa Y."/>
            <person name="Kelso J."/>
            <person name="Kitamura H."/>
            <person name="Kitano H."/>
            <person name="Kollias G."/>
            <person name="Krishnan S.P."/>
            <person name="Kruger A."/>
            <person name="Kummerfeld S.K."/>
            <person name="Kurochkin I.V."/>
            <person name="Lareau L.F."/>
            <person name="Lazarevic D."/>
            <person name="Lipovich L."/>
            <person name="Liu J."/>
            <person name="Liuni S."/>
            <person name="McWilliam S."/>
            <person name="Madan Babu M."/>
            <person name="Madera M."/>
            <person name="Marchionni L."/>
            <person name="Matsuda H."/>
            <person name="Matsuzawa S."/>
            <person name="Miki H."/>
            <person name="Mignone F."/>
            <person name="Miyake S."/>
            <person name="Morris K."/>
            <person name="Mottagui-Tabar S."/>
            <person name="Mulder N."/>
            <person name="Nakano N."/>
            <person name="Nakauchi H."/>
            <person name="Ng P."/>
            <person name="Nilsson R."/>
            <person name="Nishiguchi S."/>
            <person name="Nishikawa S."/>
            <person name="Nori F."/>
            <person name="Ohara O."/>
            <person name="Okazaki Y."/>
            <person name="Orlando V."/>
            <person name="Pang K.C."/>
            <person name="Pavan W.J."/>
            <person name="Pavesi G."/>
            <person name="Pesole G."/>
            <person name="Petrovsky N."/>
            <person name="Piazza S."/>
            <person name="Reed J."/>
            <person name="Reid J.F."/>
            <person name="Ring B.Z."/>
            <person name="Ringwald M."/>
            <person name="Rost B."/>
            <person name="Ruan Y."/>
            <person name="Salzberg S.L."/>
            <person name="Sandelin A."/>
            <person name="Schneider C."/>
            <person name="Schoenbach C."/>
            <person name="Sekiguchi K."/>
            <person name="Semple C.A."/>
            <person name="Seno S."/>
            <person name="Sessa L."/>
            <person name="Sheng Y."/>
            <person name="Shibata Y."/>
            <person name="Shimada H."/>
            <person name="Shimada K."/>
            <person name="Silva D."/>
            <person name="Sinclair B."/>
            <person name="Sperling S."/>
            <person name="Stupka E."/>
            <person name="Sugiura K."/>
            <person name="Sultana R."/>
            <person name="Takenaka Y."/>
            <person name="Taki K."/>
            <person name="Tammoja K."/>
            <person name="Tan S.L."/>
            <person name="Tang S."/>
            <person name="Taylor M.S."/>
            <person name="Tegner J."/>
            <person name="Teichmann S.A."/>
            <person name="Ueda H.R."/>
            <person name="van Nimwegen E."/>
            <person name="Verardo R."/>
            <person name="Wei C.L."/>
            <person name="Yagi K."/>
            <person name="Yamanishi H."/>
            <person name="Zabarovsky E."/>
            <person name="Zhu S."/>
            <person name="Zimmer A."/>
            <person name="Hide W."/>
            <person name="Bult C."/>
            <person name="Grimmond S.M."/>
            <person name="Teasdale R.D."/>
            <person name="Liu E.T."/>
            <person name="Brusic V."/>
            <person name="Quackenbush J."/>
            <person name="Wahlestedt C."/>
            <person name="Mattick J.S."/>
            <person name="Hume D.A."/>
            <person name="Kai C."/>
            <person name="Sasaki D."/>
            <person name="Tomaru Y."/>
            <person name="Fukuda S."/>
            <person name="Kanamori-Katayama M."/>
            <person name="Suzuki M."/>
            <person name="Aoki J."/>
            <person name="Arakawa T."/>
            <person name="Iida J."/>
            <person name="Imamura K."/>
            <person name="Itoh M."/>
            <person name="Kato T."/>
            <person name="Kawaji H."/>
            <person name="Kawagashira N."/>
            <person name="Kawashima T."/>
            <person name="Kojima M."/>
            <person name="Kondo S."/>
            <person name="Konno H."/>
            <person name="Nakano K."/>
            <person name="Ninomiya N."/>
            <person name="Nishio T."/>
            <person name="Okada M."/>
            <person name="Plessy C."/>
            <person name="Shibata K."/>
            <person name="Shiraki T."/>
            <person name="Suzuki S."/>
            <person name="Tagami M."/>
            <person name="Waki K."/>
            <person name="Watahiki A."/>
            <person name="Okamura-Oho Y."/>
            <person name="Suzuki H."/>
            <person name="Kawai J."/>
            <person name="Hayashizaki Y."/>
        </authorList>
    </citation>
    <scope>NUCLEOTIDE SEQUENCE [LARGE SCALE MRNA]</scope>
    <source>
        <strain>C57BL/6J</strain>
    </source>
</reference>
<reference key="2">
    <citation type="journal article" date="2009" name="PLoS Biol.">
        <title>Lineage-specific biology revealed by a finished genome assembly of the mouse.</title>
        <authorList>
            <person name="Church D.M."/>
            <person name="Goodstadt L."/>
            <person name="Hillier L.W."/>
            <person name="Zody M.C."/>
            <person name="Goldstein S."/>
            <person name="She X."/>
            <person name="Bult C.J."/>
            <person name="Agarwala R."/>
            <person name="Cherry J.L."/>
            <person name="DiCuccio M."/>
            <person name="Hlavina W."/>
            <person name="Kapustin Y."/>
            <person name="Meric P."/>
            <person name="Maglott D."/>
            <person name="Birtle Z."/>
            <person name="Marques A.C."/>
            <person name="Graves T."/>
            <person name="Zhou S."/>
            <person name="Teague B."/>
            <person name="Potamousis K."/>
            <person name="Churas C."/>
            <person name="Place M."/>
            <person name="Herschleb J."/>
            <person name="Runnheim R."/>
            <person name="Forrest D."/>
            <person name="Amos-Landgraf J."/>
            <person name="Schwartz D.C."/>
            <person name="Cheng Z."/>
            <person name="Lindblad-Toh K."/>
            <person name="Eichler E.E."/>
            <person name="Ponting C.P."/>
        </authorList>
    </citation>
    <scope>NUCLEOTIDE SEQUENCE [LARGE SCALE GENOMIC DNA]</scope>
    <source>
        <strain>C57BL/6J</strain>
    </source>
</reference>
<reference key="3">
    <citation type="journal article" date="2004" name="Genome Res.">
        <title>The status, quality, and expansion of the NIH full-length cDNA project: the Mammalian Gene Collection (MGC).</title>
        <authorList>
            <consortium name="The MGC Project Team"/>
        </authorList>
    </citation>
    <scope>NUCLEOTIDE SEQUENCE [LARGE SCALE MRNA]</scope>
    <source>
        <strain>FVB/N</strain>
        <tissue>Salivary gland</tissue>
    </source>
</reference>
<proteinExistence type="evidence at transcript level"/>
<gene>
    <name type="primary">Zbtb8a</name>
</gene>
<name>ZBT8A_MOUSE</name>
<comment type="function">
    <text>May be involved in transcriptional regulation.</text>
</comment>
<comment type="subcellular location">
    <subcellularLocation>
        <location evidence="5">Nucleus</location>
    </subcellularLocation>
</comment>
<sequence>MEISSHQSYLLQQLNEQRRQDVFCDCSILVEGKVFKAHRNVLFASSGYFKMLLSQNSRETSQPTTATFQTFSPDTFTVILDFVYSGKLSLTGQNVIEVMSAASFLQMTDVISVCKTFIKSSLDISEKEKDRYFSLSDKDTGSNGVERPPFYSSSWQEEGGSPHSHVSPDPGKPWNKYGYPPASQRSPQRPLAKHEQRKEPSKKAKHVRLPQPSEVVHFKPGKGEAQTDSGNHVSQSEEQVPVDAEVDPAPAGFQYSQGPDGIARSFPDDLTRLRFKCPFCTHVVKRKADLKRHLRCHTGERPYPCQACGKRFSRLDHLSSHFRTIHQACKLICRKCKRHVTDLTGQVVQEGTRRYRLCNECLADVGMESLPADLEAEQHRTAPADGDKDCRWHLSEEENRSYVEIVEDGSADLVIQQVDDSEEEEEKEIKPNIR</sequence>
<organism>
    <name type="scientific">Mus musculus</name>
    <name type="common">Mouse</name>
    <dbReference type="NCBI Taxonomy" id="10090"/>
    <lineage>
        <taxon>Eukaryota</taxon>
        <taxon>Metazoa</taxon>
        <taxon>Chordata</taxon>
        <taxon>Craniata</taxon>
        <taxon>Vertebrata</taxon>
        <taxon>Euteleostomi</taxon>
        <taxon>Mammalia</taxon>
        <taxon>Eutheria</taxon>
        <taxon>Euarchontoglires</taxon>
        <taxon>Glires</taxon>
        <taxon>Rodentia</taxon>
        <taxon>Myomorpha</taxon>
        <taxon>Muroidea</taxon>
        <taxon>Muridae</taxon>
        <taxon>Murinae</taxon>
        <taxon>Mus</taxon>
        <taxon>Mus</taxon>
    </lineage>
</organism>
<accession>Q9CWH1</accession>
<accession>Q8VD30</accession>
<evidence type="ECO:0000250" key="1">
    <source>
        <dbReference type="UniProtKB" id="Q96BR9"/>
    </source>
</evidence>
<evidence type="ECO:0000255" key="2">
    <source>
        <dbReference type="PROSITE-ProRule" id="PRU00037"/>
    </source>
</evidence>
<evidence type="ECO:0000255" key="3">
    <source>
        <dbReference type="PROSITE-ProRule" id="PRU00042"/>
    </source>
</evidence>
<evidence type="ECO:0000256" key="4">
    <source>
        <dbReference type="SAM" id="MobiDB-lite"/>
    </source>
</evidence>
<evidence type="ECO:0000305" key="5"/>
<dbReference type="EMBL" id="AK010736">
    <property type="protein sequence ID" value="BAB27151.1"/>
    <property type="molecule type" value="mRNA"/>
</dbReference>
<dbReference type="EMBL" id="AL607123">
    <property type="status" value="NOT_ANNOTATED_CDS"/>
    <property type="molecule type" value="Genomic_DNA"/>
</dbReference>
<dbReference type="EMBL" id="CU234133">
    <property type="status" value="NOT_ANNOTATED_CDS"/>
    <property type="molecule type" value="Genomic_DNA"/>
</dbReference>
<dbReference type="EMBL" id="BC017614">
    <property type="protein sequence ID" value="AAH17614.1"/>
    <property type="molecule type" value="mRNA"/>
</dbReference>
<dbReference type="CCDS" id="CCDS18690.1"/>
<dbReference type="RefSeq" id="NP_082879.1">
    <property type="nucleotide sequence ID" value="NM_028603.4"/>
</dbReference>
<dbReference type="SMR" id="Q9CWH1"/>
<dbReference type="FunCoup" id="Q9CWH1">
    <property type="interactions" value="171"/>
</dbReference>
<dbReference type="STRING" id="10090.ENSMUSP00000030610"/>
<dbReference type="PhosphoSitePlus" id="Q9CWH1"/>
<dbReference type="PaxDb" id="10090-ENSMUSP00000030610"/>
<dbReference type="PeptideAtlas" id="Q9CWH1"/>
<dbReference type="ProteomicsDB" id="275340"/>
<dbReference type="Antibodypedia" id="31329">
    <property type="antibodies" value="84 antibodies from 23 providers"/>
</dbReference>
<dbReference type="DNASU" id="73680"/>
<dbReference type="Ensembl" id="ENSMUST00000030610.3">
    <property type="protein sequence ID" value="ENSMUSP00000030610.3"/>
    <property type="gene ID" value="ENSMUSG00000028807.3"/>
</dbReference>
<dbReference type="GeneID" id="73680"/>
<dbReference type="KEGG" id="mmu:73680"/>
<dbReference type="UCSC" id="uc008uww.1">
    <property type="organism name" value="mouse"/>
</dbReference>
<dbReference type="AGR" id="MGI:1920930"/>
<dbReference type="CTD" id="653121"/>
<dbReference type="MGI" id="MGI:1920930">
    <property type="gene designation" value="Zbtb8a"/>
</dbReference>
<dbReference type="VEuPathDB" id="HostDB:ENSMUSG00000028807"/>
<dbReference type="eggNOG" id="KOG1721">
    <property type="taxonomic scope" value="Eukaryota"/>
</dbReference>
<dbReference type="GeneTree" id="ENSGT00940000157491"/>
<dbReference type="HOGENOM" id="CLU_022356_1_1_1"/>
<dbReference type="InParanoid" id="Q9CWH1"/>
<dbReference type="OMA" id="DMDSTPV"/>
<dbReference type="OrthoDB" id="624345at2759"/>
<dbReference type="PhylomeDB" id="Q9CWH1"/>
<dbReference type="TreeFam" id="TF330979"/>
<dbReference type="BioGRID-ORCS" id="73680">
    <property type="hits" value="6 hits in 76 CRISPR screens"/>
</dbReference>
<dbReference type="ChiTaRS" id="Zbtb8a">
    <property type="organism name" value="mouse"/>
</dbReference>
<dbReference type="PRO" id="PR:Q9CWH1"/>
<dbReference type="Proteomes" id="UP000000589">
    <property type="component" value="Chromosome 4"/>
</dbReference>
<dbReference type="RNAct" id="Q9CWH1">
    <property type="molecule type" value="protein"/>
</dbReference>
<dbReference type="Bgee" id="ENSMUSG00000028807">
    <property type="expression patterns" value="Expressed in renal corpuscle and 169 other cell types or tissues"/>
</dbReference>
<dbReference type="GO" id="GO:0005634">
    <property type="term" value="C:nucleus"/>
    <property type="evidence" value="ECO:0007669"/>
    <property type="project" value="UniProtKB-SubCell"/>
</dbReference>
<dbReference type="GO" id="GO:0001227">
    <property type="term" value="F:DNA-binding transcription repressor activity, RNA polymerase II-specific"/>
    <property type="evidence" value="ECO:0007669"/>
    <property type="project" value="Ensembl"/>
</dbReference>
<dbReference type="GO" id="GO:0061629">
    <property type="term" value="F:RNA polymerase II-specific DNA-binding transcription factor binding"/>
    <property type="evidence" value="ECO:0007669"/>
    <property type="project" value="Ensembl"/>
</dbReference>
<dbReference type="GO" id="GO:0000976">
    <property type="term" value="F:transcription cis-regulatory region binding"/>
    <property type="evidence" value="ECO:0007669"/>
    <property type="project" value="Ensembl"/>
</dbReference>
<dbReference type="GO" id="GO:0001223">
    <property type="term" value="F:transcription coactivator binding"/>
    <property type="evidence" value="ECO:0007669"/>
    <property type="project" value="Ensembl"/>
</dbReference>
<dbReference type="GO" id="GO:0008270">
    <property type="term" value="F:zinc ion binding"/>
    <property type="evidence" value="ECO:0007669"/>
    <property type="project" value="UniProtKB-KW"/>
</dbReference>
<dbReference type="CDD" id="cd18329">
    <property type="entry name" value="BTB_POZ_ZBTB8A_BOZF1"/>
    <property type="match status" value="1"/>
</dbReference>
<dbReference type="FunFam" id="3.30.160.60:FF:000218">
    <property type="entry name" value="Zinc finger protein 10"/>
    <property type="match status" value="1"/>
</dbReference>
<dbReference type="Gene3D" id="3.30.160.60">
    <property type="entry name" value="Classic Zinc Finger"/>
    <property type="match status" value="2"/>
</dbReference>
<dbReference type="Gene3D" id="3.30.710.10">
    <property type="entry name" value="Potassium Channel Kv1.1, Chain A"/>
    <property type="match status" value="1"/>
</dbReference>
<dbReference type="InterPro" id="IPR000210">
    <property type="entry name" value="BTB/POZ_dom"/>
</dbReference>
<dbReference type="InterPro" id="IPR011333">
    <property type="entry name" value="SKP1/BTB/POZ_sf"/>
</dbReference>
<dbReference type="InterPro" id="IPR036236">
    <property type="entry name" value="Znf_C2H2_sf"/>
</dbReference>
<dbReference type="InterPro" id="IPR013087">
    <property type="entry name" value="Znf_C2H2_type"/>
</dbReference>
<dbReference type="InterPro" id="IPR050457">
    <property type="entry name" value="ZnFinger_BTB_dom_contain"/>
</dbReference>
<dbReference type="PANTHER" id="PTHR46105">
    <property type="entry name" value="AGAP004733-PA"/>
    <property type="match status" value="1"/>
</dbReference>
<dbReference type="PANTHER" id="PTHR46105:SF12">
    <property type="entry name" value="ZINC FINGER AND BTB DOMAIN-CONTAINING PROTEIN 8A"/>
    <property type="match status" value="1"/>
</dbReference>
<dbReference type="Pfam" id="PF00651">
    <property type="entry name" value="BTB"/>
    <property type="match status" value="1"/>
</dbReference>
<dbReference type="SMART" id="SM00225">
    <property type="entry name" value="BTB"/>
    <property type="match status" value="1"/>
</dbReference>
<dbReference type="SMART" id="SM00355">
    <property type="entry name" value="ZnF_C2H2"/>
    <property type="match status" value="2"/>
</dbReference>
<dbReference type="SUPFAM" id="SSF57667">
    <property type="entry name" value="beta-beta-alpha zinc fingers"/>
    <property type="match status" value="1"/>
</dbReference>
<dbReference type="SUPFAM" id="SSF54695">
    <property type="entry name" value="POZ domain"/>
    <property type="match status" value="1"/>
</dbReference>
<dbReference type="PROSITE" id="PS50097">
    <property type="entry name" value="BTB"/>
    <property type="match status" value="1"/>
</dbReference>
<dbReference type="PROSITE" id="PS00028">
    <property type="entry name" value="ZINC_FINGER_C2H2_1"/>
    <property type="match status" value="2"/>
</dbReference>
<dbReference type="PROSITE" id="PS50157">
    <property type="entry name" value="ZINC_FINGER_C2H2_2"/>
    <property type="match status" value="2"/>
</dbReference>
<feature type="chain" id="PRO_0000378509" description="Zinc finger and BTB domain-containing protein 8A">
    <location>
        <begin position="1"/>
        <end position="434"/>
    </location>
</feature>
<feature type="domain" description="BTB" evidence="2">
    <location>
        <begin position="24"/>
        <end position="92"/>
    </location>
</feature>
<feature type="zinc finger region" description="C2H2-type 1" evidence="3">
    <location>
        <begin position="275"/>
        <end position="297"/>
    </location>
</feature>
<feature type="zinc finger region" description="C2H2-type 2" evidence="3">
    <location>
        <begin position="303"/>
        <end position="326"/>
    </location>
</feature>
<feature type="region of interest" description="Disordered" evidence="4">
    <location>
        <begin position="134"/>
        <end position="238"/>
    </location>
</feature>
<feature type="compositionally biased region" description="Basic and acidic residues" evidence="4">
    <location>
        <begin position="192"/>
        <end position="202"/>
    </location>
</feature>
<feature type="compositionally biased region" description="Polar residues" evidence="4">
    <location>
        <begin position="226"/>
        <end position="238"/>
    </location>
</feature>
<feature type="modified residue" description="Phosphoserine" evidence="1">
    <location>
        <position position="161"/>
    </location>
</feature>
<feature type="modified residue" description="Phosphoserine" evidence="1">
    <location>
        <position position="167"/>
    </location>
</feature>
<feature type="cross-link" description="Glycyl lysine isopeptide (Lys-Gly) (interchain with G-Cter in SUMO2)" evidence="1">
    <location>
        <position position="172"/>
    </location>
</feature>
<feature type="cross-link" description="Glycyl lysine isopeptide (Lys-Gly) (interchain with G-Cter in SUMO2)" evidence="1">
    <location>
        <position position="176"/>
    </location>
</feature>
<feature type="cross-link" description="Glycyl lysine isopeptide (Lys-Gly) (interchain with G-Cter in SUMO2)" evidence="1">
    <location>
        <position position="193"/>
    </location>
</feature>
<feature type="cross-link" description="Glycyl lysine isopeptide (Lys-Gly) (interchain with G-Cter in SUMO2)" evidence="1">
    <location>
        <position position="430"/>
    </location>
</feature>
<feature type="sequence conflict" description="In Ref. 3; AAH17614." evidence="5" ref="3">
    <original>D</original>
    <variation>N</variation>
    <location>
        <position position="385"/>
    </location>
</feature>
<keyword id="KW-0238">DNA-binding</keyword>
<keyword id="KW-1017">Isopeptide bond</keyword>
<keyword id="KW-0479">Metal-binding</keyword>
<keyword id="KW-0539">Nucleus</keyword>
<keyword id="KW-0597">Phosphoprotein</keyword>
<keyword id="KW-1185">Reference proteome</keyword>
<keyword id="KW-0677">Repeat</keyword>
<keyword id="KW-0804">Transcription</keyword>
<keyword id="KW-0805">Transcription regulation</keyword>
<keyword id="KW-0832">Ubl conjugation</keyword>
<keyword id="KW-0862">Zinc</keyword>
<keyword id="KW-0863">Zinc-finger</keyword>